<accession>B2XWJ8</accession>
<organism>
    <name type="scientific">Fagopyrum esculentum subsp. ancestrale</name>
    <name type="common">Wild buckwheat</name>
    <dbReference type="NCBI Taxonomy" id="180217"/>
    <lineage>
        <taxon>Eukaryota</taxon>
        <taxon>Viridiplantae</taxon>
        <taxon>Streptophyta</taxon>
        <taxon>Embryophyta</taxon>
        <taxon>Tracheophyta</taxon>
        <taxon>Spermatophyta</taxon>
        <taxon>Magnoliopsida</taxon>
        <taxon>eudicotyledons</taxon>
        <taxon>Gunneridae</taxon>
        <taxon>Pentapetalae</taxon>
        <taxon>Caryophyllales</taxon>
        <taxon>Polygonaceae</taxon>
        <taxon>Polygonoideae</taxon>
        <taxon>Fagopyreae</taxon>
        <taxon>Fagopyrum</taxon>
    </lineage>
</organism>
<name>RR15_FAGEA</name>
<reference key="1">
    <citation type="journal article" date="2008" name="BMC Plant Biol.">
        <title>Comparative chloroplast genomics and phylogenetics of Fagopyrum esculentum ssp. ancestrale - a wild ancestor of cultivated buckwheat.</title>
        <authorList>
            <person name="Logacheva M.D."/>
            <person name="Samigullin T.H."/>
            <person name="Dhingra A."/>
            <person name="Penin A.A."/>
        </authorList>
    </citation>
    <scope>NUCLEOTIDE SEQUENCE [LARGE SCALE GENOMIC DNA]</scope>
</reference>
<keyword id="KW-0150">Chloroplast</keyword>
<keyword id="KW-0934">Plastid</keyword>
<keyword id="KW-0687">Ribonucleoprotein</keyword>
<keyword id="KW-0689">Ribosomal protein</keyword>
<protein>
    <recommendedName>
        <fullName evidence="2">Small ribosomal subunit protein uS15c</fullName>
    </recommendedName>
    <alternativeName>
        <fullName>30S ribosomal protein S15, chloroplastic</fullName>
    </alternativeName>
</protein>
<gene>
    <name type="primary">rps15</name>
</gene>
<geneLocation type="chloroplast"/>
<proteinExistence type="inferred from homology"/>
<evidence type="ECO:0000250" key="1"/>
<evidence type="ECO:0000305" key="2"/>
<dbReference type="EMBL" id="EU254477">
    <property type="protein sequence ID" value="ABY79789.1"/>
    <property type="molecule type" value="Genomic_DNA"/>
</dbReference>
<dbReference type="RefSeq" id="YP_001936574.1">
    <property type="nucleotide sequence ID" value="NC_010776.1"/>
</dbReference>
<dbReference type="SMR" id="B2XWJ8"/>
<dbReference type="GeneID" id="6335978"/>
<dbReference type="GO" id="GO:0009507">
    <property type="term" value="C:chloroplast"/>
    <property type="evidence" value="ECO:0007669"/>
    <property type="project" value="UniProtKB-SubCell"/>
</dbReference>
<dbReference type="GO" id="GO:1990904">
    <property type="term" value="C:ribonucleoprotein complex"/>
    <property type="evidence" value="ECO:0007669"/>
    <property type="project" value="UniProtKB-KW"/>
</dbReference>
<dbReference type="GO" id="GO:0005840">
    <property type="term" value="C:ribosome"/>
    <property type="evidence" value="ECO:0007669"/>
    <property type="project" value="UniProtKB-KW"/>
</dbReference>
<dbReference type="GO" id="GO:0003735">
    <property type="term" value="F:structural constituent of ribosome"/>
    <property type="evidence" value="ECO:0007669"/>
    <property type="project" value="InterPro"/>
</dbReference>
<dbReference type="GO" id="GO:0006412">
    <property type="term" value="P:translation"/>
    <property type="evidence" value="ECO:0007669"/>
    <property type="project" value="UniProtKB-UniRule"/>
</dbReference>
<dbReference type="CDD" id="cd00353">
    <property type="entry name" value="Ribosomal_S15p_S13e"/>
    <property type="match status" value="1"/>
</dbReference>
<dbReference type="Gene3D" id="1.10.287.10">
    <property type="entry name" value="S15/NS1, RNA-binding"/>
    <property type="match status" value="1"/>
</dbReference>
<dbReference type="HAMAP" id="MF_01343_B">
    <property type="entry name" value="Ribosomal_uS15_B"/>
    <property type="match status" value="1"/>
</dbReference>
<dbReference type="InterPro" id="IPR000589">
    <property type="entry name" value="Ribosomal_uS15"/>
</dbReference>
<dbReference type="InterPro" id="IPR005290">
    <property type="entry name" value="Ribosomal_uS15_bac-type"/>
</dbReference>
<dbReference type="InterPro" id="IPR009068">
    <property type="entry name" value="uS15_NS1_RNA-bd_sf"/>
</dbReference>
<dbReference type="NCBIfam" id="TIGR00952">
    <property type="entry name" value="S15_bact"/>
    <property type="match status" value="1"/>
</dbReference>
<dbReference type="PANTHER" id="PTHR23321">
    <property type="entry name" value="RIBOSOMAL PROTEIN S15, BACTERIAL AND ORGANELLAR"/>
    <property type="match status" value="1"/>
</dbReference>
<dbReference type="PANTHER" id="PTHR23321:SF26">
    <property type="entry name" value="SMALL RIBOSOMAL SUBUNIT PROTEIN US15M"/>
    <property type="match status" value="1"/>
</dbReference>
<dbReference type="Pfam" id="PF00312">
    <property type="entry name" value="Ribosomal_S15"/>
    <property type="match status" value="1"/>
</dbReference>
<dbReference type="SMART" id="SM01387">
    <property type="entry name" value="Ribosomal_S15"/>
    <property type="match status" value="1"/>
</dbReference>
<dbReference type="SUPFAM" id="SSF47060">
    <property type="entry name" value="S15/NS1 RNA-binding domain"/>
    <property type="match status" value="1"/>
</dbReference>
<dbReference type="PROSITE" id="PS00362">
    <property type="entry name" value="RIBOSOMAL_S15"/>
    <property type="match status" value="1"/>
</dbReference>
<sequence length="83" mass="9920">MKKNSVISQEEKKGSAAFQVFGFTNKIRRLSAHLELHKKDYSSQRGLRKILGKRQRLLAYFSKKNRVRYKELINQLNIREIKR</sequence>
<feature type="chain" id="PRO_0000354257" description="Small ribosomal subunit protein uS15c">
    <location>
        <begin position="1"/>
        <end position="83"/>
    </location>
</feature>
<comment type="subunit">
    <text evidence="1">Part of the 30S ribosomal subunit.</text>
</comment>
<comment type="subcellular location">
    <subcellularLocation>
        <location>Plastid</location>
        <location>Chloroplast</location>
    </subcellularLocation>
</comment>
<comment type="similarity">
    <text evidence="2">Belongs to the universal ribosomal protein uS15 family.</text>
</comment>